<keyword id="KW-0963">Cytoplasm</keyword>
<keyword id="KW-0210">Decarboxylase</keyword>
<keyword id="KW-0456">Lyase</keyword>
<keyword id="KW-0627">Porphyrin biosynthesis</keyword>
<keyword id="KW-1185">Reference proteome</keyword>
<gene>
    <name evidence="1" type="primary">hemE</name>
    <name type="ordered locus">Tola_2593</name>
</gene>
<accession>C4LAY4</accession>
<evidence type="ECO:0000255" key="1">
    <source>
        <dbReference type="HAMAP-Rule" id="MF_00218"/>
    </source>
</evidence>
<feature type="chain" id="PRO_1000204242" description="Uroporphyrinogen decarboxylase">
    <location>
        <begin position="1"/>
        <end position="355"/>
    </location>
</feature>
<feature type="binding site" evidence="1">
    <location>
        <begin position="27"/>
        <end position="31"/>
    </location>
    <ligand>
        <name>substrate</name>
    </ligand>
</feature>
<feature type="binding site" evidence="1">
    <location>
        <position position="77"/>
    </location>
    <ligand>
        <name>substrate</name>
    </ligand>
</feature>
<feature type="binding site" evidence="1">
    <location>
        <position position="154"/>
    </location>
    <ligand>
        <name>substrate</name>
    </ligand>
</feature>
<feature type="binding site" evidence="1">
    <location>
        <position position="209"/>
    </location>
    <ligand>
        <name>substrate</name>
    </ligand>
</feature>
<feature type="binding site" evidence="1">
    <location>
        <position position="327"/>
    </location>
    <ligand>
        <name>substrate</name>
    </ligand>
</feature>
<feature type="site" description="Transition state stabilizer" evidence="1">
    <location>
        <position position="77"/>
    </location>
</feature>
<proteinExistence type="inferred from homology"/>
<organism>
    <name type="scientific">Tolumonas auensis (strain DSM 9187 / NBRC 110442 / TA 4)</name>
    <dbReference type="NCBI Taxonomy" id="595494"/>
    <lineage>
        <taxon>Bacteria</taxon>
        <taxon>Pseudomonadati</taxon>
        <taxon>Pseudomonadota</taxon>
        <taxon>Gammaproteobacteria</taxon>
        <taxon>Aeromonadales</taxon>
        <taxon>Aeromonadaceae</taxon>
        <taxon>Tolumonas</taxon>
    </lineage>
</organism>
<dbReference type="EC" id="4.1.1.37" evidence="1"/>
<dbReference type="EMBL" id="CP001616">
    <property type="protein sequence ID" value="ACQ94187.1"/>
    <property type="molecule type" value="Genomic_DNA"/>
</dbReference>
<dbReference type="RefSeq" id="WP_015879636.1">
    <property type="nucleotide sequence ID" value="NC_012691.1"/>
</dbReference>
<dbReference type="SMR" id="C4LAY4"/>
<dbReference type="STRING" id="595494.Tola_2593"/>
<dbReference type="KEGG" id="tau:Tola_2593"/>
<dbReference type="eggNOG" id="COG0407">
    <property type="taxonomic scope" value="Bacteria"/>
</dbReference>
<dbReference type="HOGENOM" id="CLU_040933_0_0_6"/>
<dbReference type="OrthoDB" id="9806656at2"/>
<dbReference type="UniPathway" id="UPA00251">
    <property type="reaction ID" value="UER00321"/>
</dbReference>
<dbReference type="Proteomes" id="UP000009073">
    <property type="component" value="Chromosome"/>
</dbReference>
<dbReference type="GO" id="GO:0005829">
    <property type="term" value="C:cytosol"/>
    <property type="evidence" value="ECO:0007669"/>
    <property type="project" value="TreeGrafter"/>
</dbReference>
<dbReference type="GO" id="GO:0004853">
    <property type="term" value="F:uroporphyrinogen decarboxylase activity"/>
    <property type="evidence" value="ECO:0007669"/>
    <property type="project" value="UniProtKB-UniRule"/>
</dbReference>
<dbReference type="GO" id="GO:0019353">
    <property type="term" value="P:protoporphyrinogen IX biosynthetic process from glutamate"/>
    <property type="evidence" value="ECO:0007669"/>
    <property type="project" value="TreeGrafter"/>
</dbReference>
<dbReference type="CDD" id="cd00717">
    <property type="entry name" value="URO-D"/>
    <property type="match status" value="1"/>
</dbReference>
<dbReference type="FunFam" id="3.20.20.210:FF:000001">
    <property type="entry name" value="Uroporphyrinogen decarboxylase"/>
    <property type="match status" value="1"/>
</dbReference>
<dbReference type="Gene3D" id="3.20.20.210">
    <property type="match status" value="1"/>
</dbReference>
<dbReference type="HAMAP" id="MF_00218">
    <property type="entry name" value="URO_D"/>
    <property type="match status" value="1"/>
</dbReference>
<dbReference type="InterPro" id="IPR038071">
    <property type="entry name" value="UROD/MetE-like_sf"/>
</dbReference>
<dbReference type="InterPro" id="IPR006361">
    <property type="entry name" value="Uroporphyrinogen_deCO2ase_HemE"/>
</dbReference>
<dbReference type="InterPro" id="IPR000257">
    <property type="entry name" value="Uroporphyrinogen_deCOase"/>
</dbReference>
<dbReference type="NCBIfam" id="TIGR01464">
    <property type="entry name" value="hemE"/>
    <property type="match status" value="1"/>
</dbReference>
<dbReference type="PANTHER" id="PTHR21091">
    <property type="entry name" value="METHYLTETRAHYDROFOLATE:HOMOCYSTEINE METHYLTRANSFERASE RELATED"/>
    <property type="match status" value="1"/>
</dbReference>
<dbReference type="PANTHER" id="PTHR21091:SF169">
    <property type="entry name" value="UROPORPHYRINOGEN DECARBOXYLASE"/>
    <property type="match status" value="1"/>
</dbReference>
<dbReference type="Pfam" id="PF01208">
    <property type="entry name" value="URO-D"/>
    <property type="match status" value="1"/>
</dbReference>
<dbReference type="SUPFAM" id="SSF51726">
    <property type="entry name" value="UROD/MetE-like"/>
    <property type="match status" value="1"/>
</dbReference>
<dbReference type="PROSITE" id="PS00906">
    <property type="entry name" value="UROD_1"/>
    <property type="match status" value="1"/>
</dbReference>
<dbReference type="PROSITE" id="PS00907">
    <property type="entry name" value="UROD_2"/>
    <property type="match status" value="1"/>
</dbReference>
<name>DCUP_TOLAT</name>
<sequence length="355" mass="39177">MTKIENDRYLRALLRQPVDRTPVWLMRQAGRYLPEYRQLRAEAGDFMTLCQTPELACEVTLQPLRRFELDAAILFSDILTIPDAMGLGLTFGAGEGPKFAKTIQHQRDVDALPLPDPEGELRYVMDAVRTIKKALAQQVPLIGFSGSPWTLATYMVEGGSSKQFSRIKQMMYREPKLLHGLLSKLAASVTQYLNAQIAAGADAVMIFDTWGGVLSHQDYQEFSLQYMTAIVQGIHRQYDGRTIPVTLFTKGGGQWLEAIAASGCDAIGIDWTTDISAARARVGHKVALQGNMDPAVLQGDDAVVTAKVQEILQQYGNGSGHVFNLGHGITPDIEPARVKTFVDAVHRFSAPYHQS</sequence>
<reference key="1">
    <citation type="submission" date="2009-05" db="EMBL/GenBank/DDBJ databases">
        <title>Complete sequence of Tolumonas auensis DSM 9187.</title>
        <authorList>
            <consortium name="US DOE Joint Genome Institute"/>
            <person name="Lucas S."/>
            <person name="Copeland A."/>
            <person name="Lapidus A."/>
            <person name="Glavina del Rio T."/>
            <person name="Tice H."/>
            <person name="Bruce D."/>
            <person name="Goodwin L."/>
            <person name="Pitluck S."/>
            <person name="Chertkov O."/>
            <person name="Brettin T."/>
            <person name="Detter J.C."/>
            <person name="Han C."/>
            <person name="Larimer F."/>
            <person name="Land M."/>
            <person name="Hauser L."/>
            <person name="Kyrpides N."/>
            <person name="Mikhailova N."/>
            <person name="Spring S."/>
            <person name="Beller H."/>
        </authorList>
    </citation>
    <scope>NUCLEOTIDE SEQUENCE [LARGE SCALE GENOMIC DNA]</scope>
    <source>
        <strain>DSM 9187 / NBRC 110442 / TA 4</strain>
    </source>
</reference>
<comment type="function">
    <text evidence="1">Catalyzes the decarboxylation of four acetate groups of uroporphyrinogen-III to yield coproporphyrinogen-III.</text>
</comment>
<comment type="catalytic activity">
    <reaction evidence="1">
        <text>uroporphyrinogen III + 4 H(+) = coproporphyrinogen III + 4 CO2</text>
        <dbReference type="Rhea" id="RHEA:19865"/>
        <dbReference type="ChEBI" id="CHEBI:15378"/>
        <dbReference type="ChEBI" id="CHEBI:16526"/>
        <dbReference type="ChEBI" id="CHEBI:57308"/>
        <dbReference type="ChEBI" id="CHEBI:57309"/>
        <dbReference type="EC" id="4.1.1.37"/>
    </reaction>
</comment>
<comment type="pathway">
    <text evidence="1">Porphyrin-containing compound metabolism; protoporphyrin-IX biosynthesis; coproporphyrinogen-III from 5-aminolevulinate: step 4/4.</text>
</comment>
<comment type="subunit">
    <text evidence="1">Homodimer.</text>
</comment>
<comment type="subcellular location">
    <subcellularLocation>
        <location evidence="1">Cytoplasm</location>
    </subcellularLocation>
</comment>
<comment type="similarity">
    <text evidence="1">Belongs to the uroporphyrinogen decarboxylase family.</text>
</comment>
<protein>
    <recommendedName>
        <fullName evidence="1">Uroporphyrinogen decarboxylase</fullName>
        <shortName evidence="1">UPD</shortName>
        <shortName evidence="1">URO-D</shortName>
        <ecNumber evidence="1">4.1.1.37</ecNumber>
    </recommendedName>
</protein>